<reference key="1">
    <citation type="submission" date="1998-06" db="EMBL/GenBank/DDBJ databases">
        <title>Organization of the DNAK locus of the archeabacterial halophile, Haloferax mediterranei.</title>
        <authorList>
            <person name="Kazi A.S."/>
            <person name="Nair C.K.K."/>
        </authorList>
    </citation>
    <scope>NUCLEOTIDE SEQUENCE [GENOMIC DNA]</scope>
    <source>
        <strain>ATCC 33500 / DSM 1411 / JCM 8866 / NBRC 14739 / NCIMB 2177 / R-4</strain>
    </source>
</reference>
<reference key="2">
    <citation type="journal article" date="2012" name="J. Bacteriol.">
        <title>Complete genome sequence of the metabolically versatile halophilic archaeon Haloferax mediterranei, a poly(3-hydroxybutyrate-co-3-hydroxyvalerate) producer.</title>
        <authorList>
            <person name="Han J."/>
            <person name="Zhang F."/>
            <person name="Hou J."/>
            <person name="Liu X."/>
            <person name="Li M."/>
            <person name="Liu H."/>
            <person name="Cai L."/>
            <person name="Zhang B."/>
            <person name="Chen Y."/>
            <person name="Zhou J."/>
            <person name="Hu S."/>
            <person name="Xiang H."/>
        </authorList>
    </citation>
    <scope>NUCLEOTIDE SEQUENCE [LARGE SCALE GENOMIC DNA]</scope>
    <source>
        <strain>ATCC 33500 / DSM 1411 / JCM 8866 / NBRC 14739 / NCIMB 2177 / R-4</strain>
    </source>
</reference>
<proteinExistence type="inferred from homology"/>
<gene>
    <name evidence="1" type="primary">grpE</name>
    <name type="ordered locus">HFX_1651</name>
</gene>
<evidence type="ECO:0000255" key="1">
    <source>
        <dbReference type="HAMAP-Rule" id="MF_01151"/>
    </source>
</evidence>
<evidence type="ECO:0000256" key="2">
    <source>
        <dbReference type="SAM" id="MobiDB-lite"/>
    </source>
</evidence>
<protein>
    <recommendedName>
        <fullName evidence="1">Protein GrpE</fullName>
    </recommendedName>
    <alternativeName>
        <fullName evidence="1">HSP-70 cofactor</fullName>
    </alternativeName>
</protein>
<comment type="function">
    <text evidence="1">Participates actively in the response to hyperosmotic and heat shock by preventing the aggregation of stress-denatured proteins, in association with DnaK and GrpE. It is the nucleotide exchange factor for DnaK and may function as a thermosensor. Unfolded proteins bind initially to DnaJ; upon interaction with the DnaJ-bound protein, DnaK hydrolyzes its bound ATP, resulting in the formation of a stable complex. GrpE releases ADP from DnaK; ATP binding to DnaK triggers the release of the substrate protein, thus completing the reaction cycle. Several rounds of ATP-dependent interactions between DnaJ, DnaK and GrpE are required for fully efficient folding.</text>
</comment>
<comment type="subunit">
    <text evidence="1">Homodimer.</text>
</comment>
<comment type="subcellular location">
    <subcellularLocation>
        <location evidence="1">Cytoplasm</location>
    </subcellularLocation>
</comment>
<comment type="similarity">
    <text evidence="1">Belongs to the GrpE family.</text>
</comment>
<name>GRPE_HALMT</name>
<accession>Q9HHC2</accession>
<accession>I3R547</accession>
<dbReference type="EMBL" id="AF069527">
    <property type="protein sequence ID" value="AAG23114.1"/>
    <property type="molecule type" value="Genomic_DNA"/>
</dbReference>
<dbReference type="EMBL" id="CP001868">
    <property type="protein sequence ID" value="AFK19357.1"/>
    <property type="molecule type" value="Genomic_DNA"/>
</dbReference>
<dbReference type="RefSeq" id="WP_004056753.1">
    <property type="nucleotide sequence ID" value="NC_017941.2"/>
</dbReference>
<dbReference type="SMR" id="Q9HHC2"/>
<dbReference type="STRING" id="523841.HFX_1651"/>
<dbReference type="PaxDb" id="523841-HFX_1651"/>
<dbReference type="GeneID" id="40157009"/>
<dbReference type="KEGG" id="hme:HFX_1651"/>
<dbReference type="eggNOG" id="arCOG04772">
    <property type="taxonomic scope" value="Archaea"/>
</dbReference>
<dbReference type="HOGENOM" id="CLU_057217_3_0_2"/>
<dbReference type="OrthoDB" id="372230at2157"/>
<dbReference type="Proteomes" id="UP000006469">
    <property type="component" value="Chromosome"/>
</dbReference>
<dbReference type="GO" id="GO:0005737">
    <property type="term" value="C:cytoplasm"/>
    <property type="evidence" value="ECO:0007669"/>
    <property type="project" value="UniProtKB-SubCell"/>
</dbReference>
<dbReference type="GO" id="GO:0000774">
    <property type="term" value="F:adenyl-nucleotide exchange factor activity"/>
    <property type="evidence" value="ECO:0007669"/>
    <property type="project" value="InterPro"/>
</dbReference>
<dbReference type="GO" id="GO:0042803">
    <property type="term" value="F:protein homodimerization activity"/>
    <property type="evidence" value="ECO:0007669"/>
    <property type="project" value="InterPro"/>
</dbReference>
<dbReference type="GO" id="GO:0051087">
    <property type="term" value="F:protein-folding chaperone binding"/>
    <property type="evidence" value="ECO:0007669"/>
    <property type="project" value="InterPro"/>
</dbReference>
<dbReference type="GO" id="GO:0051082">
    <property type="term" value="F:unfolded protein binding"/>
    <property type="evidence" value="ECO:0007669"/>
    <property type="project" value="TreeGrafter"/>
</dbReference>
<dbReference type="GO" id="GO:0006457">
    <property type="term" value="P:protein folding"/>
    <property type="evidence" value="ECO:0007669"/>
    <property type="project" value="InterPro"/>
</dbReference>
<dbReference type="CDD" id="cd00446">
    <property type="entry name" value="GrpE"/>
    <property type="match status" value="1"/>
</dbReference>
<dbReference type="Gene3D" id="3.90.20.20">
    <property type="match status" value="1"/>
</dbReference>
<dbReference type="Gene3D" id="2.30.22.10">
    <property type="entry name" value="Head domain of nucleotide exchange factor GrpE"/>
    <property type="match status" value="1"/>
</dbReference>
<dbReference type="HAMAP" id="MF_01151">
    <property type="entry name" value="GrpE"/>
    <property type="match status" value="1"/>
</dbReference>
<dbReference type="InterPro" id="IPR000740">
    <property type="entry name" value="GrpE"/>
</dbReference>
<dbReference type="InterPro" id="IPR013805">
    <property type="entry name" value="GrpE_coiled_coil"/>
</dbReference>
<dbReference type="InterPro" id="IPR009012">
    <property type="entry name" value="GrpE_head"/>
</dbReference>
<dbReference type="PANTHER" id="PTHR21237">
    <property type="entry name" value="GRPE PROTEIN"/>
    <property type="match status" value="1"/>
</dbReference>
<dbReference type="PANTHER" id="PTHR21237:SF23">
    <property type="entry name" value="GRPE PROTEIN HOMOLOG, MITOCHONDRIAL"/>
    <property type="match status" value="1"/>
</dbReference>
<dbReference type="Pfam" id="PF01025">
    <property type="entry name" value="GrpE"/>
    <property type="match status" value="1"/>
</dbReference>
<dbReference type="PRINTS" id="PR00773">
    <property type="entry name" value="GRPEPROTEIN"/>
</dbReference>
<dbReference type="SUPFAM" id="SSF58014">
    <property type="entry name" value="Coiled-coil domain of nucleotide exchange factor GrpE"/>
    <property type="match status" value="1"/>
</dbReference>
<dbReference type="SUPFAM" id="SSF51064">
    <property type="entry name" value="Head domain of nucleotide exchange factor GrpE"/>
    <property type="match status" value="1"/>
</dbReference>
<dbReference type="PROSITE" id="PS01071">
    <property type="entry name" value="GRPE"/>
    <property type="match status" value="1"/>
</dbReference>
<sequence>MSDDFAESVTEANAESDTETAADAESSAAEDASAADDAAPEESTGDEQAGETTAESSDAESVTVSERVAEYDDELAAEVEALEARVADLEASVADLETERDEAEETASDLESRLKRTQADFQNYKKRAKKRQQQIKERATEDFVERVVTVRDNLVRALDQDEDADIRDGIESTLKEFDRILEDENVEIIDPEPGTDVDPTRHEVMMRVESDQPADTIADVFQPGYEMAEKVIRAAQVTVSKE</sequence>
<feature type="chain" id="PRO_0000113906" description="Protein GrpE">
    <location>
        <begin position="1"/>
        <end position="242"/>
    </location>
</feature>
<feature type="region of interest" description="Disordered" evidence="2">
    <location>
        <begin position="1"/>
        <end position="75"/>
    </location>
</feature>
<feature type="region of interest" description="Disordered" evidence="2">
    <location>
        <begin position="93"/>
        <end position="136"/>
    </location>
</feature>
<feature type="compositionally biased region" description="Low complexity" evidence="2">
    <location>
        <begin position="23"/>
        <end position="37"/>
    </location>
</feature>
<feature type="compositionally biased region" description="Acidic residues" evidence="2">
    <location>
        <begin position="38"/>
        <end position="49"/>
    </location>
</feature>
<feature type="compositionally biased region" description="Polar residues" evidence="2">
    <location>
        <begin position="50"/>
        <end position="64"/>
    </location>
</feature>
<feature type="compositionally biased region" description="Acidic residues" evidence="2">
    <location>
        <begin position="96"/>
        <end position="108"/>
    </location>
</feature>
<feature type="compositionally biased region" description="Basic residues" evidence="2">
    <location>
        <begin position="124"/>
        <end position="133"/>
    </location>
</feature>
<keyword id="KW-0143">Chaperone</keyword>
<keyword id="KW-0963">Cytoplasm</keyword>
<keyword id="KW-0346">Stress response</keyword>
<organism>
    <name type="scientific">Haloferax mediterranei (strain ATCC 33500 / DSM 1411 / JCM 8866 / NBRC 14739 / NCIMB 2177 / R-4)</name>
    <name type="common">Halobacterium mediterranei</name>
    <dbReference type="NCBI Taxonomy" id="523841"/>
    <lineage>
        <taxon>Archaea</taxon>
        <taxon>Methanobacteriati</taxon>
        <taxon>Methanobacteriota</taxon>
        <taxon>Stenosarchaea group</taxon>
        <taxon>Halobacteria</taxon>
        <taxon>Halobacteriales</taxon>
        <taxon>Haloferacaceae</taxon>
        <taxon>Haloferax</taxon>
    </lineage>
</organism>